<keyword id="KW-0878">Amphibian defense peptide</keyword>
<keyword id="KW-0044">Antibiotic</keyword>
<keyword id="KW-0929">Antimicrobial</keyword>
<keyword id="KW-0165">Cleavage on pair of basic residues</keyword>
<keyword id="KW-0903">Direct protein sequencing</keyword>
<keyword id="KW-0964">Secreted</keyword>
<keyword id="KW-0732">Signal</keyword>
<dbReference type="EMBL" id="Y16564">
    <property type="protein sequence ID" value="CAA76288.1"/>
    <property type="molecule type" value="mRNA"/>
</dbReference>
<dbReference type="PIR" id="T10456">
    <property type="entry name" value="T10456"/>
</dbReference>
<dbReference type="SMR" id="P81485"/>
<dbReference type="GO" id="GO:0005576">
    <property type="term" value="C:extracellular region"/>
    <property type="evidence" value="ECO:0007669"/>
    <property type="project" value="UniProtKB-SubCell"/>
</dbReference>
<dbReference type="GO" id="GO:0042742">
    <property type="term" value="P:defense response to bacterium"/>
    <property type="evidence" value="ECO:0007669"/>
    <property type="project" value="UniProtKB-KW"/>
</dbReference>
<dbReference type="InterPro" id="IPR022731">
    <property type="entry name" value="Dermaseptin_dom"/>
</dbReference>
<dbReference type="InterPro" id="IPR004275">
    <property type="entry name" value="Frog_antimicrobial_propeptide"/>
</dbReference>
<dbReference type="InterPro" id="IPR016322">
    <property type="entry name" value="FSAP"/>
</dbReference>
<dbReference type="Pfam" id="PF12121">
    <property type="entry name" value="DD_K"/>
    <property type="match status" value="1"/>
</dbReference>
<dbReference type="Pfam" id="PF03032">
    <property type="entry name" value="FSAP_sig_propep"/>
    <property type="match status" value="1"/>
</dbReference>
<dbReference type="PIRSF" id="PIRSF001822">
    <property type="entry name" value="Dermaseptin_precursor"/>
    <property type="match status" value="1"/>
</dbReference>
<protein>
    <recommendedName>
        <fullName evidence="3">Dermaseptin-B3</fullName>
        <shortName evidence="3">DRS-B3</shortName>
    </recommendedName>
    <alternativeName>
        <fullName>Dermaseptin BIII</fullName>
    </alternativeName>
</protein>
<evidence type="ECO:0000255" key="1"/>
<evidence type="ECO:0000269" key="2">
    <source>
    </source>
</evidence>
<evidence type="ECO:0000303" key="3">
    <source>
    </source>
</evidence>
<evidence type="ECO:0000305" key="4"/>
<reference key="1">
    <citation type="journal article" date="1998" name="J. Biol. Chem.">
        <title>Structure, synthesis, and molecular cloning of dermaseptins B, a family of skin peptide antibiotics.</title>
        <authorList>
            <person name="Charpentier S."/>
            <person name="Amiche M."/>
            <person name="Mester J."/>
            <person name="Vouille V."/>
            <person name="Le Caer J.-P."/>
            <person name="Nicolas P."/>
            <person name="Delfour A."/>
        </authorList>
    </citation>
    <scope>NUCLEOTIDE SEQUENCE [MRNA]</scope>
    <scope>PROTEIN SEQUENCE OF 46-73</scope>
    <scope>MASS SPECTROMETRY</scope>
    <source>
        <tissue>Skin secretion</tissue>
    </source>
</reference>
<reference key="2">
    <citation type="journal article" date="2008" name="Peptides">
        <title>A consistent nomenclature of antimicrobial peptides isolated from frogs of the subfamily Phyllomedusinae.</title>
        <authorList>
            <person name="Amiche M."/>
            <person name="Ladram A."/>
            <person name="Nicolas P."/>
        </authorList>
    </citation>
    <scope>NOMENCLATURE</scope>
</reference>
<accession>P81485</accession>
<sequence>MAFLKKSVFLVLFLGLVSLSICEEEKREEENEEKQEDDEQSEEKRALWKNMLKGIGKLAGQAALGAVKTLVGAE</sequence>
<comment type="function">
    <text>Possesses a potent antimicrobial activity against Gram-positive and Gram-negative bacteria. Probably acts by disturbing membrane functions with its amphipathic structure.</text>
</comment>
<comment type="subcellular location">
    <subcellularLocation>
        <location>Secreted</location>
    </subcellularLocation>
</comment>
<comment type="tissue specificity">
    <text>Expressed by the skin glands.</text>
</comment>
<comment type="mass spectrometry"/>
<comment type="similarity">
    <text evidence="4">Belongs to the frog skin active peptide (FSAP) family. Dermaseptin subfamily.</text>
</comment>
<comment type="online information" name="The antimicrobial peptide database">
    <link uri="https://wangapd3.com/database/query_output.php?ID=0165"/>
</comment>
<organism>
    <name type="scientific">Phyllomedusa bicolor</name>
    <name type="common">Two-colored leaf frog</name>
    <name type="synonym">Rana bicolor</name>
    <dbReference type="NCBI Taxonomy" id="8393"/>
    <lineage>
        <taxon>Eukaryota</taxon>
        <taxon>Metazoa</taxon>
        <taxon>Chordata</taxon>
        <taxon>Craniata</taxon>
        <taxon>Vertebrata</taxon>
        <taxon>Euteleostomi</taxon>
        <taxon>Amphibia</taxon>
        <taxon>Batrachia</taxon>
        <taxon>Anura</taxon>
        <taxon>Neobatrachia</taxon>
        <taxon>Hyloidea</taxon>
        <taxon>Hylidae</taxon>
        <taxon>Phyllomedusinae</taxon>
        <taxon>Phyllomedusa</taxon>
    </lineage>
</organism>
<proteinExistence type="evidence at protein level"/>
<name>DRS3_PHYBI</name>
<feature type="signal peptide" evidence="1">
    <location>
        <begin position="1"/>
        <end position="22"/>
    </location>
</feature>
<feature type="propeptide" id="PRO_0000007095">
    <location>
        <begin position="23"/>
        <end position="43"/>
    </location>
</feature>
<feature type="peptide" id="PRO_0000007096" description="Dermaseptin-B3">
    <location>
        <begin position="46"/>
        <end position="74"/>
    </location>
</feature>